<dbReference type="EC" id="2.2.1.9" evidence="1"/>
<dbReference type="EMBL" id="CP000681">
    <property type="protein sequence ID" value="ABP74042.1"/>
    <property type="molecule type" value="Genomic_DNA"/>
</dbReference>
<dbReference type="SMR" id="A4Y259"/>
<dbReference type="STRING" id="319224.Sputcn32_0310"/>
<dbReference type="KEGG" id="spc:Sputcn32_0310"/>
<dbReference type="eggNOG" id="COG1165">
    <property type="taxonomic scope" value="Bacteria"/>
</dbReference>
<dbReference type="HOGENOM" id="CLU_006051_3_0_6"/>
<dbReference type="UniPathway" id="UPA00079"/>
<dbReference type="UniPathway" id="UPA01057">
    <property type="reaction ID" value="UER00164"/>
</dbReference>
<dbReference type="GO" id="GO:0070204">
    <property type="term" value="F:2-succinyl-5-enolpyruvyl-6-hydroxy-3-cyclohexene-1-carboxylic-acid synthase activity"/>
    <property type="evidence" value="ECO:0007669"/>
    <property type="project" value="UniProtKB-UniRule"/>
</dbReference>
<dbReference type="GO" id="GO:0000287">
    <property type="term" value="F:magnesium ion binding"/>
    <property type="evidence" value="ECO:0007669"/>
    <property type="project" value="UniProtKB-UniRule"/>
</dbReference>
<dbReference type="GO" id="GO:0030145">
    <property type="term" value="F:manganese ion binding"/>
    <property type="evidence" value="ECO:0007669"/>
    <property type="project" value="UniProtKB-UniRule"/>
</dbReference>
<dbReference type="GO" id="GO:0030976">
    <property type="term" value="F:thiamine pyrophosphate binding"/>
    <property type="evidence" value="ECO:0007669"/>
    <property type="project" value="UniProtKB-UniRule"/>
</dbReference>
<dbReference type="GO" id="GO:0009234">
    <property type="term" value="P:menaquinone biosynthetic process"/>
    <property type="evidence" value="ECO:0007669"/>
    <property type="project" value="UniProtKB-UniRule"/>
</dbReference>
<dbReference type="CDD" id="cd07037">
    <property type="entry name" value="TPP_PYR_MenD"/>
    <property type="match status" value="1"/>
</dbReference>
<dbReference type="CDD" id="cd02009">
    <property type="entry name" value="TPP_SHCHC_synthase"/>
    <property type="match status" value="1"/>
</dbReference>
<dbReference type="Gene3D" id="3.40.50.970">
    <property type="match status" value="2"/>
</dbReference>
<dbReference type="Gene3D" id="3.40.50.1220">
    <property type="entry name" value="TPP-binding domain"/>
    <property type="match status" value="1"/>
</dbReference>
<dbReference type="HAMAP" id="MF_01659">
    <property type="entry name" value="MenD"/>
    <property type="match status" value="1"/>
</dbReference>
<dbReference type="InterPro" id="IPR029035">
    <property type="entry name" value="DHS-like_NAD/FAD-binding_dom"/>
</dbReference>
<dbReference type="InterPro" id="IPR004433">
    <property type="entry name" value="MenaQ_synth_MenD"/>
</dbReference>
<dbReference type="InterPro" id="IPR032264">
    <property type="entry name" value="MenD_middle"/>
</dbReference>
<dbReference type="InterPro" id="IPR029061">
    <property type="entry name" value="THDP-binding"/>
</dbReference>
<dbReference type="InterPro" id="IPR012001">
    <property type="entry name" value="Thiamin_PyroP_enz_TPP-bd_dom"/>
</dbReference>
<dbReference type="InterPro" id="IPR011766">
    <property type="entry name" value="TPP_enzyme_TPP-bd"/>
</dbReference>
<dbReference type="NCBIfam" id="TIGR00173">
    <property type="entry name" value="menD"/>
    <property type="match status" value="1"/>
</dbReference>
<dbReference type="PANTHER" id="PTHR42916">
    <property type="entry name" value="2-SUCCINYL-5-ENOLPYRUVYL-6-HYDROXY-3-CYCLOHEXENE-1-CARBOXYLATE SYNTHASE"/>
    <property type="match status" value="1"/>
</dbReference>
<dbReference type="PANTHER" id="PTHR42916:SF1">
    <property type="entry name" value="PROTEIN PHYLLO, CHLOROPLASTIC"/>
    <property type="match status" value="1"/>
</dbReference>
<dbReference type="Pfam" id="PF02775">
    <property type="entry name" value="TPP_enzyme_C"/>
    <property type="match status" value="1"/>
</dbReference>
<dbReference type="Pfam" id="PF16582">
    <property type="entry name" value="TPP_enzyme_M_2"/>
    <property type="match status" value="1"/>
</dbReference>
<dbReference type="Pfam" id="PF02776">
    <property type="entry name" value="TPP_enzyme_N"/>
    <property type="match status" value="1"/>
</dbReference>
<dbReference type="PIRSF" id="PIRSF004983">
    <property type="entry name" value="MenD"/>
    <property type="match status" value="1"/>
</dbReference>
<dbReference type="SUPFAM" id="SSF52467">
    <property type="entry name" value="DHS-like NAD/FAD-binding domain"/>
    <property type="match status" value="1"/>
</dbReference>
<dbReference type="SUPFAM" id="SSF52518">
    <property type="entry name" value="Thiamin diphosphate-binding fold (THDP-binding)"/>
    <property type="match status" value="2"/>
</dbReference>
<comment type="function">
    <text evidence="1">Catalyzes the thiamine diphosphate-dependent decarboxylation of 2-oxoglutarate and the subsequent addition of the resulting succinic semialdehyde-thiamine pyrophosphate anion to isochorismate to yield 2-succinyl-5-enolpyruvyl-6-hydroxy-3-cyclohexene-1-carboxylate (SEPHCHC).</text>
</comment>
<comment type="catalytic activity">
    <reaction evidence="1">
        <text>isochorismate + 2-oxoglutarate + H(+) = 5-enolpyruvoyl-6-hydroxy-2-succinyl-cyclohex-3-ene-1-carboxylate + CO2</text>
        <dbReference type="Rhea" id="RHEA:25593"/>
        <dbReference type="ChEBI" id="CHEBI:15378"/>
        <dbReference type="ChEBI" id="CHEBI:16526"/>
        <dbReference type="ChEBI" id="CHEBI:16810"/>
        <dbReference type="ChEBI" id="CHEBI:29780"/>
        <dbReference type="ChEBI" id="CHEBI:58818"/>
        <dbReference type="EC" id="2.2.1.9"/>
    </reaction>
</comment>
<comment type="cofactor">
    <cofactor evidence="1">
        <name>Mg(2+)</name>
        <dbReference type="ChEBI" id="CHEBI:18420"/>
    </cofactor>
    <cofactor evidence="1">
        <name>Mn(2+)</name>
        <dbReference type="ChEBI" id="CHEBI:29035"/>
    </cofactor>
</comment>
<comment type="cofactor">
    <cofactor evidence="1">
        <name>thiamine diphosphate</name>
        <dbReference type="ChEBI" id="CHEBI:58937"/>
    </cofactor>
    <text evidence="1">Binds 1 thiamine pyrophosphate per subunit.</text>
</comment>
<comment type="pathway">
    <text evidence="1">Quinol/quinone metabolism; 1,4-dihydroxy-2-naphthoate biosynthesis; 1,4-dihydroxy-2-naphthoate from chorismate: step 2/7.</text>
</comment>
<comment type="pathway">
    <text evidence="1">Quinol/quinone metabolism; menaquinone biosynthesis.</text>
</comment>
<comment type="subunit">
    <text evidence="1">Homodimer.</text>
</comment>
<comment type="similarity">
    <text evidence="1">Belongs to the TPP enzyme family. MenD subfamily.</text>
</comment>
<sequence>MRTENTATLNLIWGALILEELARIGVQHVCMAPGSRSTPLTLAAAQQTKLKRHLHFDERGLGFMALGLAKASRAPVAIITTSGTAVANLYPAIVEAWLTHVPLIVLSGDRPPELLDCGANQAIVQPGIFAHYAKQINLPTPDAHIAPQALLTTIDEAVANQTRPVHINCMYREPLYPSELGVPILDTESPYLKPLQTWLQLSRPYTQYGKYKQVSNPSDDAIMRFVHGKGVIVAGTLTPEQDPQQLIALSQKIGWPLLTDAQSQLRQHPAAIGNIDQLLQHPKARNLLQEADRVLVFGGRLLSKRLISYLAEQHWHSYWQVLPEQNRLDPSHNAKHVWHANAAQFAALNWYRSSSANWANTLITYNDELHNLFVRNIDHGEFGEAQVVRAIANTRPLEQQLFIGNSLPVRLYDMYAPVSCCTATTYTNRGASGIDGLLATACGLAAHEGKPTSLIIGDLSQLHDLNSLAIAKSLASPLVIVILNNDGGNIFNLLPVPNEQVRNDYYRLSHGLEFGYAAAMFNLPYNQVDNLADFQDSYNEALDFQGASIIEVNVSQTQASDQIAELNLWVKQS</sequence>
<gene>
    <name evidence="1" type="primary">menD</name>
    <name type="ordered locus">Sputcn32_0310</name>
</gene>
<keyword id="KW-0460">Magnesium</keyword>
<keyword id="KW-0464">Manganese</keyword>
<keyword id="KW-0474">Menaquinone biosynthesis</keyword>
<keyword id="KW-0479">Metal-binding</keyword>
<keyword id="KW-0786">Thiamine pyrophosphate</keyword>
<keyword id="KW-0808">Transferase</keyword>
<evidence type="ECO:0000255" key="1">
    <source>
        <dbReference type="HAMAP-Rule" id="MF_01659"/>
    </source>
</evidence>
<protein>
    <recommendedName>
        <fullName evidence="1">2-succinyl-5-enolpyruvyl-6-hydroxy-3-cyclohexene-1-carboxylate synthase</fullName>
        <shortName evidence="1">SEPHCHC synthase</shortName>
        <ecNumber evidence="1">2.2.1.9</ecNumber>
    </recommendedName>
    <alternativeName>
        <fullName evidence="1">Menaquinone biosynthesis protein MenD</fullName>
    </alternativeName>
</protein>
<proteinExistence type="inferred from homology"/>
<accession>A4Y259</accession>
<name>MEND_SHEPC</name>
<reference key="1">
    <citation type="submission" date="2007-04" db="EMBL/GenBank/DDBJ databases">
        <title>Complete sequence of Shewanella putrefaciens CN-32.</title>
        <authorList>
            <consortium name="US DOE Joint Genome Institute"/>
            <person name="Copeland A."/>
            <person name="Lucas S."/>
            <person name="Lapidus A."/>
            <person name="Barry K."/>
            <person name="Detter J.C."/>
            <person name="Glavina del Rio T."/>
            <person name="Hammon N."/>
            <person name="Israni S."/>
            <person name="Dalin E."/>
            <person name="Tice H."/>
            <person name="Pitluck S."/>
            <person name="Chain P."/>
            <person name="Malfatti S."/>
            <person name="Shin M."/>
            <person name="Vergez L."/>
            <person name="Schmutz J."/>
            <person name="Larimer F."/>
            <person name="Land M."/>
            <person name="Hauser L."/>
            <person name="Kyrpides N."/>
            <person name="Mikhailova N."/>
            <person name="Romine M.F."/>
            <person name="Fredrickson J."/>
            <person name="Tiedje J."/>
            <person name="Richardson P."/>
        </authorList>
    </citation>
    <scope>NUCLEOTIDE SEQUENCE [LARGE SCALE GENOMIC DNA]</scope>
    <source>
        <strain>CN-32 / ATCC BAA-453</strain>
    </source>
</reference>
<feature type="chain" id="PRO_0000341836" description="2-succinyl-5-enolpyruvyl-6-hydroxy-3-cyclohexene-1-carboxylate synthase">
    <location>
        <begin position="1"/>
        <end position="573"/>
    </location>
</feature>
<organism>
    <name type="scientific">Shewanella putrefaciens (strain CN-32 / ATCC BAA-453)</name>
    <dbReference type="NCBI Taxonomy" id="319224"/>
    <lineage>
        <taxon>Bacteria</taxon>
        <taxon>Pseudomonadati</taxon>
        <taxon>Pseudomonadota</taxon>
        <taxon>Gammaproteobacteria</taxon>
        <taxon>Alteromonadales</taxon>
        <taxon>Shewanellaceae</taxon>
        <taxon>Shewanella</taxon>
    </lineage>
</organism>